<feature type="chain" id="PRO_1000065142" description="N-acetyl-gamma-glutamyl-phosphate reductase">
    <location>
        <begin position="1"/>
        <end position="310"/>
    </location>
</feature>
<feature type="active site" evidence="1">
    <location>
        <position position="116"/>
    </location>
</feature>
<accession>Q11J68</accession>
<name>ARGC_CHESB</name>
<proteinExistence type="inferred from homology"/>
<dbReference type="EC" id="1.2.1.38" evidence="1"/>
<dbReference type="EMBL" id="CP000390">
    <property type="protein sequence ID" value="ABG62557.1"/>
    <property type="molecule type" value="Genomic_DNA"/>
</dbReference>
<dbReference type="SMR" id="Q11J68"/>
<dbReference type="STRING" id="266779.Meso_1161"/>
<dbReference type="KEGG" id="mes:Meso_1161"/>
<dbReference type="eggNOG" id="COG0002">
    <property type="taxonomic scope" value="Bacteria"/>
</dbReference>
<dbReference type="HOGENOM" id="CLU_077118_0_0_5"/>
<dbReference type="OrthoDB" id="9801289at2"/>
<dbReference type="UniPathway" id="UPA00068">
    <property type="reaction ID" value="UER00108"/>
</dbReference>
<dbReference type="GO" id="GO:0005737">
    <property type="term" value="C:cytoplasm"/>
    <property type="evidence" value="ECO:0007669"/>
    <property type="project" value="UniProtKB-SubCell"/>
</dbReference>
<dbReference type="GO" id="GO:0003942">
    <property type="term" value="F:N-acetyl-gamma-glutamyl-phosphate reductase activity"/>
    <property type="evidence" value="ECO:0007669"/>
    <property type="project" value="UniProtKB-UniRule"/>
</dbReference>
<dbReference type="GO" id="GO:0051287">
    <property type="term" value="F:NAD binding"/>
    <property type="evidence" value="ECO:0007669"/>
    <property type="project" value="InterPro"/>
</dbReference>
<dbReference type="GO" id="GO:0006526">
    <property type="term" value="P:L-arginine biosynthetic process"/>
    <property type="evidence" value="ECO:0007669"/>
    <property type="project" value="UniProtKB-UniRule"/>
</dbReference>
<dbReference type="CDD" id="cd23935">
    <property type="entry name" value="AGPR_2_C"/>
    <property type="match status" value="1"/>
</dbReference>
<dbReference type="CDD" id="cd17896">
    <property type="entry name" value="AGPR_2_N"/>
    <property type="match status" value="1"/>
</dbReference>
<dbReference type="Gene3D" id="3.30.360.10">
    <property type="entry name" value="Dihydrodipicolinate Reductase, domain 2"/>
    <property type="match status" value="1"/>
</dbReference>
<dbReference type="Gene3D" id="3.40.50.720">
    <property type="entry name" value="NAD(P)-binding Rossmann-like Domain"/>
    <property type="match status" value="1"/>
</dbReference>
<dbReference type="HAMAP" id="MF_01110">
    <property type="entry name" value="ArgC_type2"/>
    <property type="match status" value="1"/>
</dbReference>
<dbReference type="InterPro" id="IPR010136">
    <property type="entry name" value="AGPR_type-2"/>
</dbReference>
<dbReference type="InterPro" id="IPR036291">
    <property type="entry name" value="NAD(P)-bd_dom_sf"/>
</dbReference>
<dbReference type="InterPro" id="IPR050085">
    <property type="entry name" value="NAGSA_dehydrogenase"/>
</dbReference>
<dbReference type="InterPro" id="IPR000534">
    <property type="entry name" value="Semialdehyde_DH_NAD-bd"/>
</dbReference>
<dbReference type="NCBIfam" id="TIGR01851">
    <property type="entry name" value="argC_other"/>
    <property type="match status" value="1"/>
</dbReference>
<dbReference type="PANTHER" id="PTHR32338:SF10">
    <property type="entry name" value="N-ACETYL-GAMMA-GLUTAMYL-PHOSPHATE REDUCTASE, CHLOROPLASTIC-RELATED"/>
    <property type="match status" value="1"/>
</dbReference>
<dbReference type="PANTHER" id="PTHR32338">
    <property type="entry name" value="N-ACETYL-GAMMA-GLUTAMYL-PHOSPHATE REDUCTASE, CHLOROPLASTIC-RELATED-RELATED"/>
    <property type="match status" value="1"/>
</dbReference>
<dbReference type="Pfam" id="PF01118">
    <property type="entry name" value="Semialdhyde_dh"/>
    <property type="match status" value="1"/>
</dbReference>
<dbReference type="Pfam" id="PF22698">
    <property type="entry name" value="Semialdhyde_dhC_1"/>
    <property type="match status" value="1"/>
</dbReference>
<dbReference type="SMART" id="SM00859">
    <property type="entry name" value="Semialdhyde_dh"/>
    <property type="match status" value="1"/>
</dbReference>
<dbReference type="SUPFAM" id="SSF55347">
    <property type="entry name" value="Glyceraldehyde-3-phosphate dehydrogenase-like, C-terminal domain"/>
    <property type="match status" value="1"/>
</dbReference>
<dbReference type="SUPFAM" id="SSF51735">
    <property type="entry name" value="NAD(P)-binding Rossmann-fold domains"/>
    <property type="match status" value="1"/>
</dbReference>
<keyword id="KW-0028">Amino-acid biosynthesis</keyword>
<keyword id="KW-0055">Arginine biosynthesis</keyword>
<keyword id="KW-0963">Cytoplasm</keyword>
<keyword id="KW-0521">NADP</keyword>
<keyword id="KW-0560">Oxidoreductase</keyword>
<comment type="function">
    <text evidence="1">Catalyzes the NADPH-dependent reduction of N-acetyl-5-glutamyl phosphate to yield N-acetyl-L-glutamate 5-semialdehyde.</text>
</comment>
<comment type="catalytic activity">
    <reaction evidence="1">
        <text>N-acetyl-L-glutamate 5-semialdehyde + phosphate + NADP(+) = N-acetyl-L-glutamyl 5-phosphate + NADPH + H(+)</text>
        <dbReference type="Rhea" id="RHEA:21588"/>
        <dbReference type="ChEBI" id="CHEBI:15378"/>
        <dbReference type="ChEBI" id="CHEBI:29123"/>
        <dbReference type="ChEBI" id="CHEBI:43474"/>
        <dbReference type="ChEBI" id="CHEBI:57783"/>
        <dbReference type="ChEBI" id="CHEBI:57936"/>
        <dbReference type="ChEBI" id="CHEBI:58349"/>
        <dbReference type="EC" id="1.2.1.38"/>
    </reaction>
</comment>
<comment type="pathway">
    <text evidence="1">Amino-acid biosynthesis; L-arginine biosynthesis; N(2)-acetyl-L-ornithine from L-glutamate: step 3/4.</text>
</comment>
<comment type="subcellular location">
    <subcellularLocation>
        <location evidence="1">Cytoplasm</location>
    </subcellularLocation>
</comment>
<comment type="similarity">
    <text evidence="1">Belongs to the NAGSA dehydrogenase family. Type 2 subfamily.</text>
</comment>
<protein>
    <recommendedName>
        <fullName evidence="1">N-acetyl-gamma-glutamyl-phosphate reductase</fullName>
        <shortName evidence="1">AGPR</shortName>
        <ecNumber evidence="1">1.2.1.38</ecNumber>
    </recommendedName>
    <alternativeName>
        <fullName evidence="1">N-acetyl-glutamate semialdehyde dehydrogenase</fullName>
        <shortName evidence="1">NAGSA dehydrogenase</shortName>
    </alternativeName>
</protein>
<gene>
    <name evidence="1" type="primary">argC</name>
    <name type="ordered locus">Meso_1161</name>
</gene>
<evidence type="ECO:0000255" key="1">
    <source>
        <dbReference type="HAMAP-Rule" id="MF_01110"/>
    </source>
</evidence>
<reference key="1">
    <citation type="submission" date="2006-06" db="EMBL/GenBank/DDBJ databases">
        <title>Complete sequence of chromosome of Mesorhizobium sp. BNC1.</title>
        <authorList>
            <consortium name="US DOE Joint Genome Institute"/>
            <person name="Copeland A."/>
            <person name="Lucas S."/>
            <person name="Lapidus A."/>
            <person name="Barry K."/>
            <person name="Detter J.C."/>
            <person name="Glavina del Rio T."/>
            <person name="Hammon N."/>
            <person name="Israni S."/>
            <person name="Dalin E."/>
            <person name="Tice H."/>
            <person name="Pitluck S."/>
            <person name="Chertkov O."/>
            <person name="Brettin T."/>
            <person name="Bruce D."/>
            <person name="Han C."/>
            <person name="Tapia R."/>
            <person name="Gilna P."/>
            <person name="Schmutz J."/>
            <person name="Larimer F."/>
            <person name="Land M."/>
            <person name="Hauser L."/>
            <person name="Kyrpides N."/>
            <person name="Mikhailova N."/>
            <person name="Richardson P."/>
        </authorList>
    </citation>
    <scope>NUCLEOTIDE SEQUENCE [LARGE SCALE GENOMIC DNA]</scope>
    <source>
        <strain>BNC1</strain>
    </source>
</reference>
<organism>
    <name type="scientific">Chelativorans sp. (strain BNC1)</name>
    <dbReference type="NCBI Taxonomy" id="266779"/>
    <lineage>
        <taxon>Bacteria</taxon>
        <taxon>Pseudomonadati</taxon>
        <taxon>Pseudomonadota</taxon>
        <taxon>Alphaproteobacteria</taxon>
        <taxon>Hyphomicrobiales</taxon>
        <taxon>Phyllobacteriaceae</taxon>
        <taxon>Chelativorans</taxon>
    </lineage>
</organism>
<sequence length="310" mass="33593">MTAKIFIDGEHGTTGLQIRARLGERRDIELLSIPVERRKDPAARAEFLNAADIAILCLPDDAARESVSLIANDTTRVIDASTAYRVSEGWAYGFPEMDKSQSKAIAQAKRVANPGCWPQGPIALLRPLVSAGLLPADFPVTINGITGYSGGGRSMIEDYEGKGEDAPEFFPYGLTLSHKHLPELRTYAKLARDPLMQPVVGNFAQGMITMVPLQLGHLPRVPKGEELHAAIADHYAGIEGSAVEVAPFQAIERSPEIEPERYNDTNTMRLYVFANDARAQALLLAVYDNLGKGASGAAVQNLDLMLSGLR</sequence>